<comment type="similarity">
    <text evidence="1">Belongs to the bacterial ribosomal protein bS16 family.</text>
</comment>
<dbReference type="EMBL" id="CU468135">
    <property type="protein sequence ID" value="CAO97703.1"/>
    <property type="molecule type" value="Genomic_DNA"/>
</dbReference>
<dbReference type="RefSeq" id="WP_012442365.1">
    <property type="nucleotide sequence ID" value="NC_010694.1"/>
</dbReference>
<dbReference type="SMR" id="B2VHI6"/>
<dbReference type="STRING" id="465817.ETA_26570"/>
<dbReference type="KEGG" id="eta:ETA_26570"/>
<dbReference type="eggNOG" id="COG0228">
    <property type="taxonomic scope" value="Bacteria"/>
</dbReference>
<dbReference type="HOGENOM" id="CLU_100590_5_1_6"/>
<dbReference type="OrthoDB" id="9807878at2"/>
<dbReference type="Proteomes" id="UP000001726">
    <property type="component" value="Chromosome"/>
</dbReference>
<dbReference type="GO" id="GO:0005737">
    <property type="term" value="C:cytoplasm"/>
    <property type="evidence" value="ECO:0007669"/>
    <property type="project" value="UniProtKB-ARBA"/>
</dbReference>
<dbReference type="GO" id="GO:0015935">
    <property type="term" value="C:small ribosomal subunit"/>
    <property type="evidence" value="ECO:0007669"/>
    <property type="project" value="TreeGrafter"/>
</dbReference>
<dbReference type="GO" id="GO:0003735">
    <property type="term" value="F:structural constituent of ribosome"/>
    <property type="evidence" value="ECO:0007669"/>
    <property type="project" value="InterPro"/>
</dbReference>
<dbReference type="GO" id="GO:0006412">
    <property type="term" value="P:translation"/>
    <property type="evidence" value="ECO:0007669"/>
    <property type="project" value="UniProtKB-UniRule"/>
</dbReference>
<dbReference type="FunFam" id="3.30.1320.10:FF:000001">
    <property type="entry name" value="30S ribosomal protein S16"/>
    <property type="match status" value="1"/>
</dbReference>
<dbReference type="Gene3D" id="3.30.1320.10">
    <property type="match status" value="1"/>
</dbReference>
<dbReference type="HAMAP" id="MF_00385">
    <property type="entry name" value="Ribosomal_bS16"/>
    <property type="match status" value="1"/>
</dbReference>
<dbReference type="InterPro" id="IPR000307">
    <property type="entry name" value="Ribosomal_bS16"/>
</dbReference>
<dbReference type="InterPro" id="IPR020592">
    <property type="entry name" value="Ribosomal_bS16_CS"/>
</dbReference>
<dbReference type="InterPro" id="IPR023803">
    <property type="entry name" value="Ribosomal_bS16_dom_sf"/>
</dbReference>
<dbReference type="NCBIfam" id="TIGR00002">
    <property type="entry name" value="S16"/>
    <property type="match status" value="1"/>
</dbReference>
<dbReference type="PANTHER" id="PTHR12919">
    <property type="entry name" value="30S RIBOSOMAL PROTEIN S16"/>
    <property type="match status" value="1"/>
</dbReference>
<dbReference type="PANTHER" id="PTHR12919:SF20">
    <property type="entry name" value="SMALL RIBOSOMAL SUBUNIT PROTEIN BS16M"/>
    <property type="match status" value="1"/>
</dbReference>
<dbReference type="Pfam" id="PF00886">
    <property type="entry name" value="Ribosomal_S16"/>
    <property type="match status" value="1"/>
</dbReference>
<dbReference type="SUPFAM" id="SSF54565">
    <property type="entry name" value="Ribosomal protein S16"/>
    <property type="match status" value="1"/>
</dbReference>
<dbReference type="PROSITE" id="PS00732">
    <property type="entry name" value="RIBOSOMAL_S16"/>
    <property type="match status" value="1"/>
</dbReference>
<protein>
    <recommendedName>
        <fullName evidence="1">Small ribosomal subunit protein bS16</fullName>
    </recommendedName>
    <alternativeName>
        <fullName evidence="2">30S ribosomal protein S16</fullName>
    </alternativeName>
</protein>
<reference key="1">
    <citation type="journal article" date="2008" name="Environ. Microbiol.">
        <title>The genome of Erwinia tasmaniensis strain Et1/99, a non-pathogenic bacterium in the genus Erwinia.</title>
        <authorList>
            <person name="Kube M."/>
            <person name="Migdoll A.M."/>
            <person name="Mueller I."/>
            <person name="Kuhl H."/>
            <person name="Beck A."/>
            <person name="Reinhardt R."/>
            <person name="Geider K."/>
        </authorList>
    </citation>
    <scope>NUCLEOTIDE SEQUENCE [LARGE SCALE GENOMIC DNA]</scope>
    <source>
        <strain>DSM 17950 / CFBP 7177 / CIP 109463 / NCPPB 4357 / Et1/99</strain>
    </source>
</reference>
<name>RS16_ERWT9</name>
<sequence length="82" mass="9203">MVTIRLARHGAKKRPFYQVVVTDSRNARNGRFIERVGFFNPIASGQAEALRLDLDRIEHWVGQGATLSDRVNALIKQAKKAA</sequence>
<accession>B2VHI6</accession>
<proteinExistence type="inferred from homology"/>
<gene>
    <name evidence="1" type="primary">rpsP</name>
    <name type="ordered locus">ETA_26570</name>
</gene>
<keyword id="KW-1185">Reference proteome</keyword>
<keyword id="KW-0687">Ribonucleoprotein</keyword>
<keyword id="KW-0689">Ribosomal protein</keyword>
<organism>
    <name type="scientific">Erwinia tasmaniensis (strain DSM 17950 / CFBP 7177 / CIP 109463 / NCPPB 4357 / Et1/99)</name>
    <dbReference type="NCBI Taxonomy" id="465817"/>
    <lineage>
        <taxon>Bacteria</taxon>
        <taxon>Pseudomonadati</taxon>
        <taxon>Pseudomonadota</taxon>
        <taxon>Gammaproteobacteria</taxon>
        <taxon>Enterobacterales</taxon>
        <taxon>Erwiniaceae</taxon>
        <taxon>Erwinia</taxon>
    </lineage>
</organism>
<evidence type="ECO:0000255" key="1">
    <source>
        <dbReference type="HAMAP-Rule" id="MF_00385"/>
    </source>
</evidence>
<evidence type="ECO:0000305" key="2"/>
<feature type="chain" id="PRO_1000196394" description="Small ribosomal subunit protein bS16">
    <location>
        <begin position="1"/>
        <end position="82"/>
    </location>
</feature>